<proteinExistence type="inferred from homology"/>
<name>GRA11_GIBZE</name>
<evidence type="ECO:0000255" key="1"/>
<evidence type="ECO:0000269" key="2">
    <source>
    </source>
</evidence>
<evidence type="ECO:0000303" key="3">
    <source>
    </source>
</evidence>
<evidence type="ECO:0000305" key="4"/>
<evidence type="ECO:0000305" key="5">
    <source>
    </source>
</evidence>
<reference key="1">
    <citation type="journal article" date="2007" name="Science">
        <title>The Fusarium graminearum genome reveals a link between localized polymorphism and pathogen specialization.</title>
        <authorList>
            <person name="Cuomo C.A."/>
            <person name="Gueldener U."/>
            <person name="Xu J.-R."/>
            <person name="Trail F."/>
            <person name="Turgeon B.G."/>
            <person name="Di Pietro A."/>
            <person name="Walton J.D."/>
            <person name="Ma L.-J."/>
            <person name="Baker S.E."/>
            <person name="Rep M."/>
            <person name="Adam G."/>
            <person name="Antoniw J."/>
            <person name="Baldwin T."/>
            <person name="Calvo S.E."/>
            <person name="Chang Y.-L."/>
            <person name="DeCaprio D."/>
            <person name="Gale L.R."/>
            <person name="Gnerre S."/>
            <person name="Goswami R.S."/>
            <person name="Hammond-Kosack K."/>
            <person name="Harris L.J."/>
            <person name="Hilburn K."/>
            <person name="Kennell J.C."/>
            <person name="Kroken S."/>
            <person name="Magnuson J.K."/>
            <person name="Mannhaupt G."/>
            <person name="Mauceli E.W."/>
            <person name="Mewes H.-W."/>
            <person name="Mitterbauer R."/>
            <person name="Muehlbauer G."/>
            <person name="Muensterkoetter M."/>
            <person name="Nelson D."/>
            <person name="O'Donnell K."/>
            <person name="Ouellet T."/>
            <person name="Qi W."/>
            <person name="Quesneville H."/>
            <person name="Roncero M.I.G."/>
            <person name="Seong K.-Y."/>
            <person name="Tetko I.V."/>
            <person name="Urban M."/>
            <person name="Waalwijk C."/>
            <person name="Ward T.J."/>
            <person name="Yao J."/>
            <person name="Birren B.W."/>
            <person name="Kistler H.C."/>
        </authorList>
    </citation>
    <scope>NUCLEOTIDE SEQUENCE [LARGE SCALE GENOMIC DNA]</scope>
    <source>
        <strain>ATCC MYA-4620 / CBS 123657 / FGSC 9075 / NRRL 31084 / PH-1</strain>
    </source>
</reference>
<reference key="2">
    <citation type="journal article" date="2010" name="Nature">
        <title>Comparative genomics reveals mobile pathogenicity chromosomes in Fusarium.</title>
        <authorList>
            <person name="Ma L.-J."/>
            <person name="van der Does H.C."/>
            <person name="Borkovich K.A."/>
            <person name="Coleman J.J."/>
            <person name="Daboussi M.-J."/>
            <person name="Di Pietro A."/>
            <person name="Dufresne M."/>
            <person name="Freitag M."/>
            <person name="Grabherr M."/>
            <person name="Henrissat B."/>
            <person name="Houterman P.M."/>
            <person name="Kang S."/>
            <person name="Shim W.-B."/>
            <person name="Woloshuk C."/>
            <person name="Xie X."/>
            <person name="Xu J.-R."/>
            <person name="Antoniw J."/>
            <person name="Baker S.E."/>
            <person name="Bluhm B.H."/>
            <person name="Breakspear A."/>
            <person name="Brown D.W."/>
            <person name="Butchko R.A.E."/>
            <person name="Chapman S."/>
            <person name="Coulson R."/>
            <person name="Coutinho P.M."/>
            <person name="Danchin E.G.J."/>
            <person name="Diener A."/>
            <person name="Gale L.R."/>
            <person name="Gardiner D.M."/>
            <person name="Goff S."/>
            <person name="Hammond-Kosack K.E."/>
            <person name="Hilburn K."/>
            <person name="Hua-Van A."/>
            <person name="Jonkers W."/>
            <person name="Kazan K."/>
            <person name="Kodira C.D."/>
            <person name="Koehrsen M."/>
            <person name="Kumar L."/>
            <person name="Lee Y.-H."/>
            <person name="Li L."/>
            <person name="Manners J.M."/>
            <person name="Miranda-Saavedra D."/>
            <person name="Mukherjee M."/>
            <person name="Park G."/>
            <person name="Park J."/>
            <person name="Park S.-Y."/>
            <person name="Proctor R.H."/>
            <person name="Regev A."/>
            <person name="Ruiz-Roldan M.C."/>
            <person name="Sain D."/>
            <person name="Sakthikumar S."/>
            <person name="Sykes S."/>
            <person name="Schwartz D.C."/>
            <person name="Turgeon B.G."/>
            <person name="Wapinski I."/>
            <person name="Yoder O."/>
            <person name="Young S."/>
            <person name="Zeng Q."/>
            <person name="Zhou S."/>
            <person name="Galagan J."/>
            <person name="Cuomo C.A."/>
            <person name="Kistler H.C."/>
            <person name="Rep M."/>
        </authorList>
    </citation>
    <scope>GENOME REANNOTATION</scope>
    <source>
        <strain>ATCC MYA-4620 / CBS 123657 / FGSC 9075 / NRRL 31084 / PH-1</strain>
    </source>
</reference>
<reference key="3">
    <citation type="journal article" date="2015" name="BMC Genomics">
        <title>The completed genome sequence of the pathogenic ascomycete fungus Fusarium graminearum.</title>
        <authorList>
            <person name="King R."/>
            <person name="Urban M."/>
            <person name="Hammond-Kosack M.C.U."/>
            <person name="Hassani-Pak K."/>
            <person name="Hammond-Kosack K.E."/>
        </authorList>
    </citation>
    <scope>NUCLEOTIDE SEQUENCE [LARGE SCALE GENOMIC DNA]</scope>
    <source>
        <strain>ATCC MYA-4620 / CBS 123657 / FGSC 9075 / NRRL 31084 / PH-1</strain>
    </source>
</reference>
<reference key="4">
    <citation type="journal article" date="2018" name="J. Am. Chem. Soc.">
        <title>Gramillin A and B: cyclic lipopeptides identified as the nonribosomal biosynthetic products of Fusarium graminearum.</title>
        <authorList>
            <person name="Bahadoor A."/>
            <person name="Brauer E.K."/>
            <person name="Bosnich W."/>
            <person name="Schneiderman D."/>
            <person name="Johnston A."/>
            <person name="Aubin Y."/>
            <person name="Blackwell B."/>
            <person name="Melanson J.E."/>
            <person name="Harris L.J."/>
        </authorList>
    </citation>
    <scope>FUNCTION</scope>
    <scope>PATHWAY</scope>
</reference>
<comment type="function">
    <text evidence="2 5">AB hydrolase superfamily protein; part of the gene cluster that mediates the biosynthesis of gramillins A and B, bicyclic lipopeptides that induce cell death in maize leaves but not in wheat leaves (PubMed:30395461). The nonribosomal peptide synthetase GRA1 incorporates respectively a glutamic adic (Glu), a leucine (Leu), a serine (Ser), a hydroxyglutamine (HOGln), a 2-amino decanoic acid, and 2 cysteins (CysB and CysA) (Probable). The biosynthesis of 2-amino decanoic acid incorporated in gramillins could be initiated by a fatty acid synthase composed of the alpha and beta subunits FGSG_00036 and FGSG_11656 (Probable). The cytochrome P450 monooxygenase FGSG_15680 could hydroxylate the fatty acid chain (Probable). Subsequent oxidation to the ketone by the oxidoreductase FGSG_00048 and transamination by aminotransferase FGSG_00049 could form 2-amino-decanoic acid (Probable). On the other hand, FGSG_15680 could also be responsible for the HO-modified glutamine at the gamma-position (Probable). Whether hydroxylation occurs on the fully assembled product or on the Gln residue prior to assembly into the gramillins requires further proof (Probable). The thioredoxin FGSG_00043 could also be required for the disulfide-bond formation between CysA and CysB (Probable). The specific involvement of the remaining proteins from the cluster is more difficult to discern, but could have broader regulatory (FGSG_00040 and FGSG_11657) or enzymatic functions (FGSG_00044 and FGSG_00045) (Probable). The final C-domain of GRA1 does not possess the expected sequence of a termination CT domain, often implicated in macrocyclization and release of a cyclopeptidein fungal NRPs; and the thioesterase FGSG_00047 may act in concert with the terminal C-domain of GRA1 to catalyze the formation of the macrocyclic anhydride and release of the products (Probable).</text>
</comment>
<comment type="pathway">
    <text evidence="5">Mycotoxin biosynthesis.</text>
</comment>
<comment type="similarity">
    <text evidence="4">Belongs to the AB hydrolase superfamily.</text>
</comment>
<gene>
    <name type="ORF">FG00044</name>
    <name type="ORF">FGRAMPH1_01T00147</name>
    <name type="ORF">FGSG_00044</name>
</gene>
<feature type="chain" id="PRO_0000450580" description="AB hydrolase superfamily protein FGSG_00044">
    <location>
        <begin position="1"/>
        <end position="322"/>
    </location>
</feature>
<feature type="domain" description="AB hydrolase-1" evidence="1">
    <location>
        <begin position="36"/>
        <end position="319"/>
    </location>
</feature>
<keyword id="KW-0378">Hydrolase</keyword>
<keyword id="KW-1185">Reference proteome</keyword>
<organism>
    <name type="scientific">Gibberella zeae (strain ATCC MYA-4620 / CBS 123657 / FGSC 9075 / NRRL 31084 / PH-1)</name>
    <name type="common">Wheat head blight fungus</name>
    <name type="synonym">Fusarium graminearum</name>
    <dbReference type="NCBI Taxonomy" id="229533"/>
    <lineage>
        <taxon>Eukaryota</taxon>
        <taxon>Fungi</taxon>
        <taxon>Dikarya</taxon>
        <taxon>Ascomycota</taxon>
        <taxon>Pezizomycotina</taxon>
        <taxon>Sordariomycetes</taxon>
        <taxon>Hypocreomycetidae</taxon>
        <taxon>Hypocreales</taxon>
        <taxon>Nectriaceae</taxon>
        <taxon>Fusarium</taxon>
    </lineage>
</organism>
<sequence>MNNPWELDHFREELVSVNIDAAQPQQLFLSVRGPPRTTPKQPVAIIECGAAATTRWWTVVQRLLCPTLRVYCYDRAGLGRSGHAVVFPRTASSMAFELERLFETVGVEPPFIFITHSYGAIITREFLARLPRPKQSVVGMLFVESNQEKTHQELIVSSHLSTSLSGLNSLVSTGLYEDHQYSEAEVEAILKYESGTTTNRSDKPSAAISELENMESSARALADREQLQKHILSPNPITVMRGDITRDLRRLFKTSGVMHQGAEEIESFLEHFARVDRQLQREILQLSHSARFVQAKKSGHHVEATEPELITAEVRRIVKLVR</sequence>
<protein>
    <recommendedName>
        <fullName evidence="3">AB hydrolase superfamily protein FGSG_00044</fullName>
        <ecNumber evidence="5">3.-.-.-</ecNumber>
    </recommendedName>
    <alternativeName>
        <fullName evidence="3">Gramillins biosynthetic cluster protein FGSG_00044</fullName>
    </alternativeName>
</protein>
<dbReference type="EC" id="3.-.-.-" evidence="5"/>
<dbReference type="EMBL" id="HG970332">
    <property type="protein sequence ID" value="CEF71873.1"/>
    <property type="molecule type" value="Genomic_DNA"/>
</dbReference>
<dbReference type="RefSeq" id="XP_011315633.1">
    <property type="nucleotide sequence ID" value="XM_011317331.1"/>
</dbReference>
<dbReference type="SMR" id="I1R9B1"/>
<dbReference type="STRING" id="229533.I1R9B1"/>
<dbReference type="ESTHER" id="gibze-gra11">
    <property type="family name" value="6_AlphaBeta_hydrolase"/>
</dbReference>
<dbReference type="GeneID" id="23547560"/>
<dbReference type="KEGG" id="fgr:FGSG_00044"/>
<dbReference type="VEuPathDB" id="FungiDB:FGRAMPH1_01G00147"/>
<dbReference type="eggNOG" id="ENOG502SKVF">
    <property type="taxonomic scope" value="Eukaryota"/>
</dbReference>
<dbReference type="HOGENOM" id="CLU_020336_9_1_1"/>
<dbReference type="InParanoid" id="I1R9B1"/>
<dbReference type="OrthoDB" id="31270at110618"/>
<dbReference type="Proteomes" id="UP000070720">
    <property type="component" value="Chromosome 1"/>
</dbReference>
<dbReference type="GO" id="GO:0016787">
    <property type="term" value="F:hydrolase activity"/>
    <property type="evidence" value="ECO:0007669"/>
    <property type="project" value="UniProtKB-KW"/>
</dbReference>
<dbReference type="Gene3D" id="3.40.50.1820">
    <property type="entry name" value="alpha/beta hydrolase"/>
    <property type="match status" value="1"/>
</dbReference>
<dbReference type="InterPro" id="IPR000073">
    <property type="entry name" value="AB_hydrolase_1"/>
</dbReference>
<dbReference type="InterPro" id="IPR029058">
    <property type="entry name" value="AB_hydrolase_fold"/>
</dbReference>
<dbReference type="Pfam" id="PF12697">
    <property type="entry name" value="Abhydrolase_6"/>
    <property type="match status" value="1"/>
</dbReference>
<dbReference type="SUPFAM" id="SSF53474">
    <property type="entry name" value="alpha/beta-Hydrolases"/>
    <property type="match status" value="1"/>
</dbReference>
<accession>I1R9B1</accession>
<accession>A0A098CZ41</accession>